<keyword id="KW-1185">Reference proteome</keyword>
<accession>P73136</accession>
<evidence type="ECO:0000305" key="1"/>
<protein>
    <recommendedName>
        <fullName>Uncharacterized protein slr1025</fullName>
    </recommendedName>
</protein>
<reference key="1">
    <citation type="journal article" date="1996" name="DNA Res.">
        <title>Sequence analysis of the genome of the unicellular cyanobacterium Synechocystis sp. strain PCC6803. II. Sequence determination of the entire genome and assignment of potential protein-coding regions.</title>
        <authorList>
            <person name="Kaneko T."/>
            <person name="Sato S."/>
            <person name="Kotani H."/>
            <person name="Tanaka A."/>
            <person name="Asamizu E."/>
            <person name="Nakamura Y."/>
            <person name="Miyajima N."/>
            <person name="Hirosawa M."/>
            <person name="Sugiura M."/>
            <person name="Sasamoto S."/>
            <person name="Kimura T."/>
            <person name="Hosouchi T."/>
            <person name="Matsuno A."/>
            <person name="Muraki A."/>
            <person name="Nakazaki N."/>
            <person name="Naruo K."/>
            <person name="Okumura S."/>
            <person name="Shimpo S."/>
            <person name="Takeuchi C."/>
            <person name="Wada T."/>
            <person name="Watanabe A."/>
            <person name="Yamada M."/>
            <person name="Yasuda M."/>
            <person name="Tabata S."/>
        </authorList>
    </citation>
    <scope>NUCLEOTIDE SEQUENCE [LARGE SCALE GENOMIC DNA]</scope>
    <source>
        <strain>ATCC 27184 / PCC 6803 / Kazusa</strain>
    </source>
</reference>
<feature type="chain" id="PRO_0000157883" description="Uncharacterized protein slr1025">
    <location>
        <begin position="1"/>
        <end position="112"/>
    </location>
</feature>
<sequence>MKNKLGIILVCNCLFSLFINRGVGAEETINIGDCSFNGHPLYGKIQLVGSFPDLTVQVVSSFPDLKVQLVESFPNQCGQWQIVTSFPDTKVQIVESFPDVKIQYVDSFPGLP</sequence>
<name>Y1025_SYNY3</name>
<gene>
    <name type="ordered locus">slr1025</name>
</gene>
<proteinExistence type="predicted"/>
<dbReference type="EMBL" id="BA000022">
    <property type="protein sequence ID" value="BAA17162.1"/>
    <property type="molecule type" value="Genomic_DNA"/>
</dbReference>
<dbReference type="PIR" id="S75248">
    <property type="entry name" value="S75248"/>
</dbReference>
<dbReference type="SMR" id="P73136"/>
<dbReference type="IntAct" id="P73136">
    <property type="interactions" value="4"/>
</dbReference>
<dbReference type="STRING" id="1148.gene:10498024"/>
<dbReference type="PaxDb" id="1148-1652239"/>
<dbReference type="EnsemblBacteria" id="BAA17162">
    <property type="protein sequence ID" value="BAA17162"/>
    <property type="gene ID" value="BAA17162"/>
</dbReference>
<dbReference type="KEGG" id="syn:slr1025"/>
<dbReference type="eggNOG" id="ENOG503309S">
    <property type="taxonomic scope" value="Bacteria"/>
</dbReference>
<dbReference type="InParanoid" id="P73136"/>
<dbReference type="Proteomes" id="UP000001425">
    <property type="component" value="Chromosome"/>
</dbReference>
<organism>
    <name type="scientific">Synechocystis sp. (strain ATCC 27184 / PCC 6803 / Kazusa)</name>
    <dbReference type="NCBI Taxonomy" id="1111708"/>
    <lineage>
        <taxon>Bacteria</taxon>
        <taxon>Bacillati</taxon>
        <taxon>Cyanobacteriota</taxon>
        <taxon>Cyanophyceae</taxon>
        <taxon>Synechococcales</taxon>
        <taxon>Merismopediaceae</taxon>
        <taxon>Synechocystis</taxon>
    </lineage>
</organism>
<comment type="similarity">
    <text evidence="1">To U.parvum UU089.1.</text>
</comment>